<keyword id="KW-0687">Ribonucleoprotein</keyword>
<keyword id="KW-0689">Ribosomal protein</keyword>
<sequence>MKNKIKIRLKSFDHRSLDQATKEIVSAVKRTFANINGPIPLPKKIGRFTVNRSPHVHKKSREQFEIRTHKRLLVIDDPNPAVVDALSKVDLAAGVDVVIELESGE</sequence>
<evidence type="ECO:0000255" key="1">
    <source>
        <dbReference type="HAMAP-Rule" id="MF_00508"/>
    </source>
</evidence>
<evidence type="ECO:0000305" key="2"/>
<gene>
    <name evidence="1" type="primary">rpsJ</name>
    <name type="ordered locus">RPR_06235</name>
</gene>
<reference key="1">
    <citation type="journal article" date="2009" name="PLoS ONE">
        <title>Genome sequence of the endosymbiont Rickettsia peacockii and comparison with virulent Rickettsia rickettsii: identification of virulence factors.</title>
        <authorList>
            <person name="Felsheim R.F."/>
            <person name="Kurtti T.J."/>
            <person name="Munderloh U.G."/>
        </authorList>
    </citation>
    <scope>NUCLEOTIDE SEQUENCE [LARGE SCALE GENOMIC DNA]</scope>
    <source>
        <strain>Rustic</strain>
    </source>
</reference>
<accession>C4K2I0</accession>
<comment type="function">
    <text evidence="1">Involved in the binding of tRNA to the ribosomes.</text>
</comment>
<comment type="subunit">
    <text evidence="1">Part of the 30S ribosomal subunit.</text>
</comment>
<comment type="similarity">
    <text evidence="1">Belongs to the universal ribosomal protein uS10 family.</text>
</comment>
<feature type="chain" id="PRO_1000206596" description="Small ribosomal subunit protein uS10">
    <location>
        <begin position="1"/>
        <end position="105"/>
    </location>
</feature>
<organism>
    <name type="scientific">Rickettsia peacockii (strain Rustic)</name>
    <dbReference type="NCBI Taxonomy" id="562019"/>
    <lineage>
        <taxon>Bacteria</taxon>
        <taxon>Pseudomonadati</taxon>
        <taxon>Pseudomonadota</taxon>
        <taxon>Alphaproteobacteria</taxon>
        <taxon>Rickettsiales</taxon>
        <taxon>Rickettsiaceae</taxon>
        <taxon>Rickettsieae</taxon>
        <taxon>Rickettsia</taxon>
        <taxon>spotted fever group</taxon>
    </lineage>
</organism>
<protein>
    <recommendedName>
        <fullName evidence="1">Small ribosomal subunit protein uS10</fullName>
    </recommendedName>
    <alternativeName>
        <fullName evidence="2">30S ribosomal protein S10</fullName>
    </alternativeName>
</protein>
<dbReference type="EMBL" id="CP001227">
    <property type="protein sequence ID" value="ACR47777.1"/>
    <property type="molecule type" value="Genomic_DNA"/>
</dbReference>
<dbReference type="RefSeq" id="WP_012736947.1">
    <property type="nucleotide sequence ID" value="NC_012730.1"/>
</dbReference>
<dbReference type="SMR" id="C4K2I0"/>
<dbReference type="KEGG" id="rpk:RPR_06235"/>
<dbReference type="HOGENOM" id="CLU_122625_1_3_5"/>
<dbReference type="Proteomes" id="UP000005015">
    <property type="component" value="Chromosome"/>
</dbReference>
<dbReference type="GO" id="GO:1990904">
    <property type="term" value="C:ribonucleoprotein complex"/>
    <property type="evidence" value="ECO:0007669"/>
    <property type="project" value="UniProtKB-KW"/>
</dbReference>
<dbReference type="GO" id="GO:0005840">
    <property type="term" value="C:ribosome"/>
    <property type="evidence" value="ECO:0007669"/>
    <property type="project" value="UniProtKB-KW"/>
</dbReference>
<dbReference type="GO" id="GO:0003735">
    <property type="term" value="F:structural constituent of ribosome"/>
    <property type="evidence" value="ECO:0007669"/>
    <property type="project" value="InterPro"/>
</dbReference>
<dbReference type="GO" id="GO:0000049">
    <property type="term" value="F:tRNA binding"/>
    <property type="evidence" value="ECO:0007669"/>
    <property type="project" value="UniProtKB-UniRule"/>
</dbReference>
<dbReference type="GO" id="GO:0006412">
    <property type="term" value="P:translation"/>
    <property type="evidence" value="ECO:0007669"/>
    <property type="project" value="UniProtKB-UniRule"/>
</dbReference>
<dbReference type="FunFam" id="3.30.70.600:FF:000003">
    <property type="entry name" value="30S ribosomal protein S10"/>
    <property type="match status" value="1"/>
</dbReference>
<dbReference type="Gene3D" id="3.30.70.600">
    <property type="entry name" value="Ribosomal protein S10 domain"/>
    <property type="match status" value="1"/>
</dbReference>
<dbReference type="HAMAP" id="MF_00508">
    <property type="entry name" value="Ribosomal_uS10"/>
    <property type="match status" value="1"/>
</dbReference>
<dbReference type="InterPro" id="IPR001848">
    <property type="entry name" value="Ribosomal_uS10"/>
</dbReference>
<dbReference type="InterPro" id="IPR027486">
    <property type="entry name" value="Ribosomal_uS10_dom"/>
</dbReference>
<dbReference type="InterPro" id="IPR036838">
    <property type="entry name" value="Ribosomal_uS10_dom_sf"/>
</dbReference>
<dbReference type="NCBIfam" id="NF001861">
    <property type="entry name" value="PRK00596.1"/>
    <property type="match status" value="1"/>
</dbReference>
<dbReference type="NCBIfam" id="TIGR01049">
    <property type="entry name" value="rpsJ_bact"/>
    <property type="match status" value="1"/>
</dbReference>
<dbReference type="PANTHER" id="PTHR11700">
    <property type="entry name" value="30S RIBOSOMAL PROTEIN S10 FAMILY MEMBER"/>
    <property type="match status" value="1"/>
</dbReference>
<dbReference type="Pfam" id="PF00338">
    <property type="entry name" value="Ribosomal_S10"/>
    <property type="match status" value="1"/>
</dbReference>
<dbReference type="PRINTS" id="PR00971">
    <property type="entry name" value="RIBOSOMALS10"/>
</dbReference>
<dbReference type="SMART" id="SM01403">
    <property type="entry name" value="Ribosomal_S10"/>
    <property type="match status" value="1"/>
</dbReference>
<dbReference type="SUPFAM" id="SSF54999">
    <property type="entry name" value="Ribosomal protein S10"/>
    <property type="match status" value="1"/>
</dbReference>
<name>RS10_RICPU</name>
<proteinExistence type="inferred from homology"/>